<sequence length="508" mass="56242">MEILRTKSQSAAVVIGISKFFDEKENRDVIVTASDFKRNNAFIFKDSGNYFLGLENIFRNSLDELKDILILAGGSISKSKITQAGLSHMITFLEKLCLSDDAGVNKALIFIVFQIHDSSQRRGGVCTLFDVLYNYLVQRKLNQESEFLSYGTYKEKKYIYINGKTVTYVCKNADALTIKELANSKSHMTYADTIGSFRKNASGMDAVTFLTVKMDTMHTASIFGKTYNIGQLYYRQLNVEVNTLKKVLANIDDHSRVKMHGNSRDGFVKRLDDAGKSRATGLIRALDHSNSIRFKSIGMGRDEKLSYVVDSCFIRKMQNGRGLCVTIDNINKLIEHKLVHDCGIGRTCSCGAKACDDESLLDQLAERGHDVVANAKEAMSAMCDDEEHAEKIAVTKSDAKLDDRIVQGKGSRYMSASVYRSRLNTESTTTNNAQSPVSDPVNASANVKTSPAGTHTDESVMKKEDHGVIVNESTTFKINSDVVFDAAEATFADTSSGLSSLLKTKMKF</sequence>
<proteinExistence type="predicted"/>
<keyword id="KW-1185">Reference proteome</keyword>
<accession>Q9INI2</accession>
<organism>
    <name type="scientific">Banna virus</name>
    <name type="common">BAV</name>
    <dbReference type="NCBI Taxonomy" id="77763"/>
    <lineage>
        <taxon>Viruses</taxon>
        <taxon>Riboviria</taxon>
        <taxon>Orthornavirae</taxon>
        <taxon>Duplornaviricota</taxon>
        <taxon>Resentoviricetes</taxon>
        <taxon>Reovirales</taxon>
        <taxon>Sedoreoviridae</taxon>
        <taxon>Seadornavirus</taxon>
        <taxon>Seadornavirus bannaense</taxon>
    </lineage>
</organism>
<feature type="chain" id="PRO_0000404234" description="Non-structural protein 1">
    <location>
        <begin position="1"/>
        <end position="508"/>
    </location>
</feature>
<feature type="region of interest" description="Disordered" evidence="1">
    <location>
        <begin position="424"/>
        <end position="464"/>
    </location>
</feature>
<feature type="compositionally biased region" description="Polar residues" evidence="1">
    <location>
        <begin position="424"/>
        <end position="453"/>
    </location>
</feature>
<feature type="compositionally biased region" description="Basic and acidic residues" evidence="1">
    <location>
        <begin position="455"/>
        <end position="464"/>
    </location>
</feature>
<reference key="1">
    <citation type="journal article" date="2000" name="J. Gen. Virol.">
        <title>Complete sequence determination and genetic analysis of Banna virus and Kadipiro virus: proposal for assignment to a new genus (Seadornavirus) within the family Reoviridae.</title>
        <authorList>
            <person name="Attoui H."/>
            <person name="Billoir F."/>
            <person name="Biagini P."/>
            <person name="de Micco P."/>
            <person name="de Lamballerie X."/>
        </authorList>
    </citation>
    <scope>NUCLEOTIDE SEQUENCE [GENOMIC RNA]</scope>
    <source>
        <strain>JKT-6423</strain>
    </source>
</reference>
<gene>
    <name type="primary">Segment-5</name>
    <name type="synonym">S5</name>
</gene>
<protein>
    <recommendedName>
        <fullName>Non-structural protein 1</fullName>
        <shortName>NS1</shortName>
    </recommendedName>
</protein>
<name>NS1_BANNV</name>
<evidence type="ECO:0000256" key="1">
    <source>
        <dbReference type="SAM" id="MobiDB-lite"/>
    </source>
</evidence>
<dbReference type="EMBL" id="AF134517">
    <property type="protein sequence ID" value="AAF78858.1"/>
    <property type="molecule type" value="Genomic_RNA"/>
</dbReference>
<dbReference type="RefSeq" id="NP_694478.1">
    <property type="nucleotide sequence ID" value="NC_004220.1"/>
</dbReference>
<dbReference type="SMR" id="Q9INI2"/>
<dbReference type="KEGG" id="vg:995351"/>
<dbReference type="Proteomes" id="UP000000832">
    <property type="component" value="Genome"/>
</dbReference>
<dbReference type="InterPro" id="IPR026373">
    <property type="entry name" value="VP5/VP6"/>
</dbReference>
<dbReference type="NCBIfam" id="TIGR04231">
    <property type="entry name" value="seadorna_VP5"/>
    <property type="match status" value="1"/>
</dbReference>